<feature type="chain" id="PRO_1000195319" description="Protein-export protein SecB">
    <location>
        <begin position="1"/>
        <end position="155"/>
    </location>
</feature>
<proteinExistence type="inferred from homology"/>
<evidence type="ECO:0000255" key="1">
    <source>
        <dbReference type="HAMAP-Rule" id="MF_00821"/>
    </source>
</evidence>
<reference key="1">
    <citation type="journal article" date="2008" name="J. Bacteriol.">
        <title>Insights into the environmental resistance gene pool from the genome sequence of the multidrug-resistant environmental isolate Escherichia coli SMS-3-5.</title>
        <authorList>
            <person name="Fricke W.F."/>
            <person name="Wright M.S."/>
            <person name="Lindell A.H."/>
            <person name="Harkins D.M."/>
            <person name="Baker-Austin C."/>
            <person name="Ravel J."/>
            <person name="Stepanauskas R."/>
        </authorList>
    </citation>
    <scope>NUCLEOTIDE SEQUENCE [LARGE SCALE GENOMIC DNA]</scope>
    <source>
        <strain>SMS-3-5 / SECEC</strain>
    </source>
</reference>
<name>SECB_ECOSM</name>
<protein>
    <recommendedName>
        <fullName evidence="1">Protein-export protein SecB</fullName>
    </recommendedName>
</protein>
<keyword id="KW-0143">Chaperone</keyword>
<keyword id="KW-0963">Cytoplasm</keyword>
<keyword id="KW-0653">Protein transport</keyword>
<keyword id="KW-0811">Translocation</keyword>
<keyword id="KW-0813">Transport</keyword>
<organism>
    <name type="scientific">Escherichia coli (strain SMS-3-5 / SECEC)</name>
    <dbReference type="NCBI Taxonomy" id="439855"/>
    <lineage>
        <taxon>Bacteria</taxon>
        <taxon>Pseudomonadati</taxon>
        <taxon>Pseudomonadota</taxon>
        <taxon>Gammaproteobacteria</taxon>
        <taxon>Enterobacterales</taxon>
        <taxon>Enterobacteriaceae</taxon>
        <taxon>Escherichia</taxon>
    </lineage>
</organism>
<gene>
    <name evidence="1" type="primary">secB</name>
    <name type="ordered locus">EcSMS35_3946</name>
</gene>
<sequence>MSEQNNTEMTFQIQRIYTKDISFEAPNAPHVFQKDWQPEVKLDLDTASSQLADDVYEVVLRVTVTASLGEETAFLCEVQQGGIFSIAGIEGTQMAHCLGAYCPNILFPYARECITSMVSRGTFPQLNLAPVNFDALFMNYLQQQAGEGTEEHQDA</sequence>
<comment type="function">
    <text evidence="1">One of the proteins required for the normal export of preproteins out of the cell cytoplasm. It is a molecular chaperone that binds to a subset of precursor proteins, maintaining them in a translocation-competent state. It also specifically binds to its receptor SecA.</text>
</comment>
<comment type="subunit">
    <text evidence="1">Homotetramer, a dimer of dimers. One homotetramer interacts with 1 SecA dimer.</text>
</comment>
<comment type="subcellular location">
    <subcellularLocation>
        <location evidence="1">Cytoplasm</location>
    </subcellularLocation>
</comment>
<comment type="similarity">
    <text evidence="1">Belongs to the SecB family.</text>
</comment>
<dbReference type="EMBL" id="CP000970">
    <property type="protein sequence ID" value="ACB17799.1"/>
    <property type="molecule type" value="Genomic_DNA"/>
</dbReference>
<dbReference type="RefSeq" id="WP_000003377.1">
    <property type="nucleotide sequence ID" value="NC_010498.1"/>
</dbReference>
<dbReference type="SMR" id="B1LK48"/>
<dbReference type="GeneID" id="86944403"/>
<dbReference type="KEGG" id="ecm:EcSMS35_3946"/>
<dbReference type="HOGENOM" id="CLU_111574_1_0_6"/>
<dbReference type="Proteomes" id="UP000007011">
    <property type="component" value="Chromosome"/>
</dbReference>
<dbReference type="GO" id="GO:0005737">
    <property type="term" value="C:cytoplasm"/>
    <property type="evidence" value="ECO:0007669"/>
    <property type="project" value="UniProtKB-SubCell"/>
</dbReference>
<dbReference type="GO" id="GO:0051082">
    <property type="term" value="F:unfolded protein binding"/>
    <property type="evidence" value="ECO:0007669"/>
    <property type="project" value="InterPro"/>
</dbReference>
<dbReference type="GO" id="GO:0006457">
    <property type="term" value="P:protein folding"/>
    <property type="evidence" value="ECO:0007669"/>
    <property type="project" value="UniProtKB-UniRule"/>
</dbReference>
<dbReference type="GO" id="GO:0051262">
    <property type="term" value="P:protein tetramerization"/>
    <property type="evidence" value="ECO:0007669"/>
    <property type="project" value="InterPro"/>
</dbReference>
<dbReference type="GO" id="GO:0015031">
    <property type="term" value="P:protein transport"/>
    <property type="evidence" value="ECO:0007669"/>
    <property type="project" value="UniProtKB-UniRule"/>
</dbReference>
<dbReference type="CDD" id="cd00557">
    <property type="entry name" value="Translocase_SecB"/>
    <property type="match status" value="1"/>
</dbReference>
<dbReference type="FunFam" id="3.10.420.10:FF:000001">
    <property type="entry name" value="Protein-export chaperone SecB"/>
    <property type="match status" value="1"/>
</dbReference>
<dbReference type="Gene3D" id="3.10.420.10">
    <property type="entry name" value="SecB-like"/>
    <property type="match status" value="1"/>
</dbReference>
<dbReference type="HAMAP" id="MF_00821">
    <property type="entry name" value="SecB"/>
    <property type="match status" value="1"/>
</dbReference>
<dbReference type="InterPro" id="IPR003708">
    <property type="entry name" value="SecB"/>
</dbReference>
<dbReference type="InterPro" id="IPR035958">
    <property type="entry name" value="SecB-like_sf"/>
</dbReference>
<dbReference type="NCBIfam" id="NF004390">
    <property type="entry name" value="PRK05751.1-1"/>
    <property type="match status" value="1"/>
</dbReference>
<dbReference type="NCBIfam" id="NF004393">
    <property type="entry name" value="PRK05751.1-4"/>
    <property type="match status" value="1"/>
</dbReference>
<dbReference type="NCBIfam" id="TIGR00809">
    <property type="entry name" value="secB"/>
    <property type="match status" value="1"/>
</dbReference>
<dbReference type="PANTHER" id="PTHR36918">
    <property type="match status" value="1"/>
</dbReference>
<dbReference type="PANTHER" id="PTHR36918:SF1">
    <property type="entry name" value="PROTEIN-EXPORT PROTEIN SECB"/>
    <property type="match status" value="1"/>
</dbReference>
<dbReference type="Pfam" id="PF02556">
    <property type="entry name" value="SecB"/>
    <property type="match status" value="1"/>
</dbReference>
<dbReference type="PRINTS" id="PR01594">
    <property type="entry name" value="SECBCHAPRONE"/>
</dbReference>
<dbReference type="SUPFAM" id="SSF54611">
    <property type="entry name" value="SecB-like"/>
    <property type="match status" value="1"/>
</dbReference>
<accession>B1LK48</accession>